<comment type="subcellular location">
    <subcellularLocation>
        <location evidence="2">Membrane</location>
        <topology evidence="2">Single-pass membrane protein</topology>
    </subcellularLocation>
</comment>
<gene>
    <name type="ordered locus">HI_1496</name>
</gene>
<feature type="chain" id="PRO_0000078077" description="Uncharacterized protein HI_1496">
    <location>
        <begin position="1"/>
        <end position="84"/>
    </location>
</feature>
<feature type="transmembrane region" description="Helical" evidence="1">
    <location>
        <begin position="7"/>
        <end position="23"/>
    </location>
</feature>
<evidence type="ECO:0000255" key="1"/>
<evidence type="ECO:0000305" key="2"/>
<proteinExistence type="predicted"/>
<protein>
    <recommendedName>
        <fullName>Uncharacterized protein HI_1496</fullName>
    </recommendedName>
</protein>
<keyword id="KW-0472">Membrane</keyword>
<keyword id="KW-1185">Reference proteome</keyword>
<keyword id="KW-0812">Transmembrane</keyword>
<keyword id="KW-1133">Transmembrane helix</keyword>
<name>Y1496_HAEIN</name>
<accession>P44220</accession>
<sequence>MMNLILAFSGVIALYGGYLYLRLRQSQKQAATLQKEKEQLQTQKTVAETKVKNYQVKQKNEENLISRSRTSLLERMHNDGDLRD</sequence>
<reference key="1">
    <citation type="journal article" date="1995" name="Science">
        <title>Whole-genome random sequencing and assembly of Haemophilus influenzae Rd.</title>
        <authorList>
            <person name="Fleischmann R.D."/>
            <person name="Adams M.D."/>
            <person name="White O."/>
            <person name="Clayton R.A."/>
            <person name="Kirkness E.F."/>
            <person name="Kerlavage A.R."/>
            <person name="Bult C.J."/>
            <person name="Tomb J.-F."/>
            <person name="Dougherty B.A."/>
            <person name="Merrick J.M."/>
            <person name="McKenney K."/>
            <person name="Sutton G.G."/>
            <person name="FitzHugh W."/>
            <person name="Fields C.A."/>
            <person name="Gocayne J.D."/>
            <person name="Scott J.D."/>
            <person name="Shirley R."/>
            <person name="Liu L.-I."/>
            <person name="Glodek A."/>
            <person name="Kelley J.M."/>
            <person name="Weidman J.F."/>
            <person name="Phillips C.A."/>
            <person name="Spriggs T."/>
            <person name="Hedblom E."/>
            <person name="Cotton M.D."/>
            <person name="Utterback T.R."/>
            <person name="Hanna M.C."/>
            <person name="Nguyen D.T."/>
            <person name="Saudek D.M."/>
            <person name="Brandon R.C."/>
            <person name="Fine L.D."/>
            <person name="Fritchman J.L."/>
            <person name="Fuhrmann J.L."/>
            <person name="Geoghagen N.S.M."/>
            <person name="Gnehm C.L."/>
            <person name="McDonald L.A."/>
            <person name="Small K.V."/>
            <person name="Fraser C.M."/>
            <person name="Smith H.O."/>
            <person name="Venter J.C."/>
        </authorList>
    </citation>
    <scope>NUCLEOTIDE SEQUENCE [LARGE SCALE GENOMIC DNA]</scope>
    <source>
        <strain>ATCC 51907 / DSM 11121 / KW20 / Rd</strain>
    </source>
</reference>
<dbReference type="EMBL" id="L42023">
    <property type="protein sequence ID" value="AAC23147.1"/>
    <property type="molecule type" value="Genomic_DNA"/>
</dbReference>
<dbReference type="PIR" id="E64032">
    <property type="entry name" value="E64032"/>
</dbReference>
<dbReference type="RefSeq" id="NP_439645.1">
    <property type="nucleotide sequence ID" value="NC_000907.1"/>
</dbReference>
<dbReference type="SMR" id="P44220"/>
<dbReference type="STRING" id="71421.HI_1496"/>
<dbReference type="EnsemblBacteria" id="AAC23147">
    <property type="protein sequence ID" value="AAC23147"/>
    <property type="gene ID" value="HI_1496"/>
</dbReference>
<dbReference type="KEGG" id="hin:HI_1496"/>
<dbReference type="PATRIC" id="fig|71421.8.peg.1564"/>
<dbReference type="HOGENOM" id="CLU_187422_0_0_6"/>
<dbReference type="BioCyc" id="HINF71421:G1GJ1-1518-MONOMER"/>
<dbReference type="Proteomes" id="UP000000579">
    <property type="component" value="Chromosome"/>
</dbReference>
<dbReference type="GO" id="GO:0016020">
    <property type="term" value="C:membrane"/>
    <property type="evidence" value="ECO:0007669"/>
    <property type="project" value="UniProtKB-SubCell"/>
</dbReference>
<dbReference type="InterPro" id="IPR020274">
    <property type="entry name" value="Uncharacterised_HI1496"/>
</dbReference>
<dbReference type="Pfam" id="PF10883">
    <property type="entry name" value="DUF2681"/>
    <property type="match status" value="1"/>
</dbReference>
<organism>
    <name type="scientific">Haemophilus influenzae (strain ATCC 51907 / DSM 11121 / KW20 / Rd)</name>
    <dbReference type="NCBI Taxonomy" id="71421"/>
    <lineage>
        <taxon>Bacteria</taxon>
        <taxon>Pseudomonadati</taxon>
        <taxon>Pseudomonadota</taxon>
        <taxon>Gammaproteobacteria</taxon>
        <taxon>Pasteurellales</taxon>
        <taxon>Pasteurellaceae</taxon>
        <taxon>Haemophilus</taxon>
    </lineage>
</organism>